<keyword id="KW-1003">Cell membrane</keyword>
<keyword id="KW-1015">Disulfide bond</keyword>
<keyword id="KW-0297">G-protein coupled receptor</keyword>
<keyword id="KW-0325">Glycoprotein</keyword>
<keyword id="KW-0333">Golgi apparatus</keyword>
<keyword id="KW-0449">Lipoprotein</keyword>
<keyword id="KW-0472">Membrane</keyword>
<keyword id="KW-0564">Palmitate</keyword>
<keyword id="KW-0675">Receptor</keyword>
<keyword id="KW-1185">Reference proteome</keyword>
<keyword id="KW-0807">Transducer</keyword>
<keyword id="KW-0812">Transmembrane</keyword>
<keyword id="KW-1133">Transmembrane helix</keyword>
<protein>
    <recommendedName>
        <fullName>D(2) dopamine receptor A</fullName>
        <shortName>D2R-A</shortName>
    </recommendedName>
    <alternativeName>
        <fullName>D2R 1</fullName>
    </alternativeName>
</protein>
<evidence type="ECO:0000250" key="1"/>
<evidence type="ECO:0000250" key="2">
    <source>
        <dbReference type="UniProtKB" id="P14416"/>
    </source>
</evidence>
<evidence type="ECO:0000255" key="3"/>
<evidence type="ECO:0000255" key="4">
    <source>
        <dbReference type="PROSITE-ProRule" id="PRU00521"/>
    </source>
</evidence>
<evidence type="ECO:0000256" key="5">
    <source>
        <dbReference type="SAM" id="MobiDB-lite"/>
    </source>
</evidence>
<sequence length="442" mass="49738">MDPQNLSMYNDDINNGTNGTAVDQKPHYNYYAMLLTLLVFVIVFGNVLVCIAVSREKALQTTTNYLIVSLAVADLLVATLVMPWAVYMEVVGEWRFSRIHCDIFVTLDVMMCTASILNLCAISIDRYTAVAMPMLYNTRYSSKRRVTVMISVVWVLSFAISCPLLFGLNNTGSKVCIIDNPAFVIYSSIVSFYVPFIVTLLVYVQIYIVLRKRRKRVNTKRNSRGVAVDAHKDKCTHPEDVKLCSVFVKSNGSFPADKKKVILVQEAGKHPEDMEMEMMSSTSPPEKTKHKSASPDHNQLAVPATSNQCKNASLTSPVESPYKAEKNGHPKDSTKPAKVFEIQSMPNGKTRTSIKTMSKKKLSQHKEKKATQMLAIVLGVFIICWLPFFIIHILNMHCNCNIPQALYSAFTWLGYVNSAVNPIIYTTFNVEFRKAFIKILHC</sequence>
<gene>
    <name type="primary">drd2-a</name>
</gene>
<comment type="function">
    <text>This is one of the five types (D1 to D5) of receptors for dopamine. The activity of this receptor is mediated by G proteins which inhibits adenylyl cyclase. In Xenopus D2R is involved in the regulation of the melanotrope cells of the intermediate pituitary during background adaptation of the animal.</text>
</comment>
<comment type="subcellular location">
    <subcellularLocation>
        <location evidence="2">Cell membrane</location>
        <topology evidence="3">Multi-pass membrane protein</topology>
    </subcellularLocation>
    <subcellularLocation>
        <location evidence="2">Golgi apparatus membrane</location>
        <topology evidence="3">Multi-pass membrane protein</topology>
    </subcellularLocation>
</comment>
<comment type="tissue specificity">
    <text>Brain; pituitary.</text>
</comment>
<comment type="PTM">
    <text evidence="2">Palmitoylated. Palmitoylation is probably required for proper localization to the plasma membrane and stability of the receptor.</text>
</comment>
<comment type="similarity">
    <text evidence="4">Belongs to the G-protein coupled receptor 1 family.</text>
</comment>
<proteinExistence type="evidence at transcript level"/>
<dbReference type="EMBL" id="X59500">
    <property type="protein sequence ID" value="CAA42088.1"/>
    <property type="molecule type" value="mRNA"/>
</dbReference>
<dbReference type="PIR" id="S14827">
    <property type="entry name" value="DYXLD2"/>
</dbReference>
<dbReference type="RefSeq" id="NP_001095212.1">
    <property type="nucleotide sequence ID" value="NM_001101742.1"/>
</dbReference>
<dbReference type="SMR" id="P24628"/>
<dbReference type="GlyCosmos" id="P24628">
    <property type="glycosylation" value="3 sites, No reported glycans"/>
</dbReference>
<dbReference type="GeneID" id="378584"/>
<dbReference type="KEGG" id="xla:378584"/>
<dbReference type="AGR" id="Xenbase:XB-GENE-1005782"/>
<dbReference type="CTD" id="378584"/>
<dbReference type="Xenbase" id="XB-GENE-1005782">
    <property type="gene designation" value="drd2.L"/>
</dbReference>
<dbReference type="OrthoDB" id="10034726at2759"/>
<dbReference type="Proteomes" id="UP000186698">
    <property type="component" value="Chromosome 7L"/>
</dbReference>
<dbReference type="Bgee" id="378584">
    <property type="expression patterns" value="Expressed in brain"/>
</dbReference>
<dbReference type="GO" id="GO:0098978">
    <property type="term" value="C:glutamatergic synapse"/>
    <property type="evidence" value="ECO:0000318"/>
    <property type="project" value="GO_Central"/>
</dbReference>
<dbReference type="GO" id="GO:0000139">
    <property type="term" value="C:Golgi membrane"/>
    <property type="evidence" value="ECO:0007669"/>
    <property type="project" value="UniProtKB-SubCell"/>
</dbReference>
<dbReference type="GO" id="GO:0005886">
    <property type="term" value="C:plasma membrane"/>
    <property type="evidence" value="ECO:0000318"/>
    <property type="project" value="GO_Central"/>
</dbReference>
<dbReference type="GO" id="GO:0042734">
    <property type="term" value="C:presynaptic membrane"/>
    <property type="evidence" value="ECO:0000318"/>
    <property type="project" value="GO_Central"/>
</dbReference>
<dbReference type="GO" id="GO:0001591">
    <property type="term" value="F:dopamine neurotransmitter receptor activity, coupled via Gi/Go"/>
    <property type="evidence" value="ECO:0000318"/>
    <property type="project" value="GO_Central"/>
</dbReference>
<dbReference type="GO" id="GO:0004930">
    <property type="term" value="F:G protein-coupled receptor activity"/>
    <property type="evidence" value="ECO:0000318"/>
    <property type="project" value="GO_Central"/>
</dbReference>
<dbReference type="GO" id="GO:0007195">
    <property type="term" value="P:adenylate cyclase-inhibiting dopamine receptor signaling pathway"/>
    <property type="evidence" value="ECO:0000318"/>
    <property type="project" value="GO_Central"/>
</dbReference>
<dbReference type="GO" id="GO:0051481">
    <property type="term" value="P:negative regulation of cytosolic calcium ion concentration"/>
    <property type="evidence" value="ECO:0000318"/>
    <property type="project" value="GO_Central"/>
</dbReference>
<dbReference type="GO" id="GO:0051967">
    <property type="term" value="P:negative regulation of synaptic transmission, glutamatergic"/>
    <property type="evidence" value="ECO:0000318"/>
    <property type="project" value="GO_Central"/>
</dbReference>
<dbReference type="GO" id="GO:0060158">
    <property type="term" value="P:phospholipase C-activating dopamine receptor signaling pathway"/>
    <property type="evidence" value="ECO:0000318"/>
    <property type="project" value="GO_Central"/>
</dbReference>
<dbReference type="GO" id="GO:0014059">
    <property type="term" value="P:regulation of dopamine secretion"/>
    <property type="evidence" value="ECO:0000318"/>
    <property type="project" value="GO_Central"/>
</dbReference>
<dbReference type="GO" id="GO:0043266">
    <property type="term" value="P:regulation of potassium ion transport"/>
    <property type="evidence" value="ECO:0000318"/>
    <property type="project" value="GO_Central"/>
</dbReference>
<dbReference type="CDD" id="cd15309">
    <property type="entry name" value="7tmA_D2_dopamine_R"/>
    <property type="match status" value="1"/>
</dbReference>
<dbReference type="FunFam" id="1.20.1070.10:FF:000099">
    <property type="entry name" value="D(2) dopamine receptor"/>
    <property type="match status" value="1"/>
</dbReference>
<dbReference type="FunFam" id="1.20.1070.10:FF:000086">
    <property type="entry name" value="Dopamine D2 receptor 2"/>
    <property type="match status" value="1"/>
</dbReference>
<dbReference type="Gene3D" id="1.20.1070.10">
    <property type="entry name" value="Rhodopsin 7-helix transmembrane proteins"/>
    <property type="match status" value="2"/>
</dbReference>
<dbReference type="InterPro" id="IPR001922">
    <property type="entry name" value="Dopamine_D2_rcpt"/>
</dbReference>
<dbReference type="InterPro" id="IPR000929">
    <property type="entry name" value="Dopamine_rcpt"/>
</dbReference>
<dbReference type="InterPro" id="IPR000276">
    <property type="entry name" value="GPCR_Rhodpsn"/>
</dbReference>
<dbReference type="InterPro" id="IPR017452">
    <property type="entry name" value="GPCR_Rhodpsn_7TM"/>
</dbReference>
<dbReference type="PANTHER" id="PTHR24248">
    <property type="entry name" value="ADRENERGIC RECEPTOR-RELATED G-PROTEIN COUPLED RECEPTOR"/>
    <property type="match status" value="1"/>
</dbReference>
<dbReference type="PANTHER" id="PTHR24248:SF87">
    <property type="entry name" value="D(2) DOPAMINE RECEPTOR"/>
    <property type="match status" value="1"/>
</dbReference>
<dbReference type="Pfam" id="PF00001">
    <property type="entry name" value="7tm_1"/>
    <property type="match status" value="1"/>
</dbReference>
<dbReference type="PRINTS" id="PR00567">
    <property type="entry name" value="DOPAMINED2R"/>
</dbReference>
<dbReference type="PRINTS" id="PR00242">
    <property type="entry name" value="DOPAMINER"/>
</dbReference>
<dbReference type="PRINTS" id="PR00237">
    <property type="entry name" value="GPCRRHODOPSN"/>
</dbReference>
<dbReference type="SMART" id="SM01381">
    <property type="entry name" value="7TM_GPCR_Srsx"/>
    <property type="match status" value="1"/>
</dbReference>
<dbReference type="SUPFAM" id="SSF81321">
    <property type="entry name" value="Family A G protein-coupled receptor-like"/>
    <property type="match status" value="1"/>
</dbReference>
<dbReference type="PROSITE" id="PS00237">
    <property type="entry name" value="G_PROTEIN_RECEP_F1_1"/>
    <property type="match status" value="1"/>
</dbReference>
<dbReference type="PROSITE" id="PS50262">
    <property type="entry name" value="G_PROTEIN_RECEP_F1_2"/>
    <property type="match status" value="1"/>
</dbReference>
<reference key="1">
    <citation type="journal article" date="1991" name="FEBS Lett.">
        <title>Cloning and sequence analysis of brain cDNA encoding a Xenopus D2 dopamine receptor.</title>
        <authorList>
            <person name="Martens G.J.M."/>
            <person name="Molhuizen H.O.F."/>
            <person name="Groeneveld D."/>
            <person name="Roubos E.W."/>
        </authorList>
    </citation>
    <scope>NUCLEOTIDE SEQUENCE [MRNA]</scope>
    <source>
        <tissue>Brain</tissue>
    </source>
</reference>
<accession>P24628</accession>
<name>DRD2A_XENLA</name>
<feature type="chain" id="PRO_0000069393" description="D(2) dopamine receptor A">
    <location>
        <begin position="1"/>
        <end position="442"/>
    </location>
</feature>
<feature type="topological domain" description="Extracellular" evidence="1">
    <location>
        <begin position="1"/>
        <end position="31"/>
    </location>
</feature>
<feature type="transmembrane region" description="Helical; Name=1" evidence="1">
    <location>
        <begin position="32"/>
        <end position="54"/>
    </location>
</feature>
<feature type="topological domain" description="Cytoplasmic" evidence="1">
    <location>
        <begin position="55"/>
        <end position="64"/>
    </location>
</feature>
<feature type="transmembrane region" description="Helical; Name=2" evidence="1">
    <location>
        <begin position="65"/>
        <end position="87"/>
    </location>
</feature>
<feature type="topological domain" description="Extracellular" evidence="1">
    <location>
        <begin position="88"/>
        <end position="102"/>
    </location>
</feature>
<feature type="transmembrane region" description="Helical; Name=3" evidence="1">
    <location>
        <begin position="103"/>
        <end position="124"/>
    </location>
</feature>
<feature type="topological domain" description="Cytoplasmic" evidence="1">
    <location>
        <begin position="125"/>
        <end position="145"/>
    </location>
</feature>
<feature type="transmembrane region" description="Helical; Name=4" evidence="1">
    <location>
        <begin position="146"/>
        <end position="166"/>
    </location>
</feature>
<feature type="topological domain" description="Extracellular" evidence="1">
    <location>
        <begin position="167"/>
        <end position="182"/>
    </location>
</feature>
<feature type="transmembrane region" description="Helical; Name=5" evidence="1">
    <location>
        <begin position="183"/>
        <end position="207"/>
    </location>
</feature>
<feature type="topological domain" description="Cytoplasmic" evidence="1">
    <location>
        <begin position="208"/>
        <end position="372"/>
    </location>
</feature>
<feature type="transmembrane region" description="Helical; Name=6" evidence="1">
    <location>
        <begin position="373"/>
        <end position="394"/>
    </location>
</feature>
<feature type="topological domain" description="Extracellular" evidence="1">
    <location>
        <begin position="395"/>
        <end position="408"/>
    </location>
</feature>
<feature type="transmembrane region" description="Helical; Name=7" evidence="1">
    <location>
        <begin position="409"/>
        <end position="430"/>
    </location>
</feature>
<feature type="topological domain" description="Cytoplasmic" evidence="1">
    <location>
        <begin position="431"/>
        <end position="442"/>
    </location>
</feature>
<feature type="region of interest" description="Disordered" evidence="5">
    <location>
        <begin position="273"/>
        <end position="335"/>
    </location>
</feature>
<feature type="compositionally biased region" description="Polar residues" evidence="5">
    <location>
        <begin position="304"/>
        <end position="318"/>
    </location>
</feature>
<feature type="compositionally biased region" description="Basic and acidic residues" evidence="5">
    <location>
        <begin position="322"/>
        <end position="335"/>
    </location>
</feature>
<feature type="site" description="Important for receptor activation" evidence="1">
    <location>
        <position position="188"/>
    </location>
</feature>
<feature type="site" description="Important for receptor activation" evidence="1">
    <location>
        <position position="191"/>
    </location>
</feature>
<feature type="lipid moiety-binding region" description="S-palmitoyl cysteine" evidence="2">
    <location>
        <position position="442"/>
    </location>
</feature>
<feature type="glycosylation site" description="N-linked (GlcNAc...) asparagine" evidence="3">
    <location>
        <position position="5"/>
    </location>
</feature>
<feature type="glycosylation site" description="N-linked (GlcNAc...) asparagine" evidence="3">
    <location>
        <position position="15"/>
    </location>
</feature>
<feature type="glycosylation site" description="N-linked (GlcNAc...) asparagine" evidence="3">
    <location>
        <position position="18"/>
    </location>
</feature>
<feature type="disulfide bond" evidence="4">
    <location>
        <begin position="101"/>
        <end position="176"/>
    </location>
</feature>
<feature type="disulfide bond" evidence="4">
    <location>
        <begin position="398"/>
        <end position="400"/>
    </location>
</feature>
<organism>
    <name type="scientific">Xenopus laevis</name>
    <name type="common">African clawed frog</name>
    <dbReference type="NCBI Taxonomy" id="8355"/>
    <lineage>
        <taxon>Eukaryota</taxon>
        <taxon>Metazoa</taxon>
        <taxon>Chordata</taxon>
        <taxon>Craniata</taxon>
        <taxon>Vertebrata</taxon>
        <taxon>Euteleostomi</taxon>
        <taxon>Amphibia</taxon>
        <taxon>Batrachia</taxon>
        <taxon>Anura</taxon>
        <taxon>Pipoidea</taxon>
        <taxon>Pipidae</taxon>
        <taxon>Xenopodinae</taxon>
        <taxon>Xenopus</taxon>
        <taxon>Xenopus</taxon>
    </lineage>
</organism>